<organism>
    <name type="scientific">Saccharomyces cerevisiae (strain YJM789)</name>
    <name type="common">Baker's yeast</name>
    <dbReference type="NCBI Taxonomy" id="307796"/>
    <lineage>
        <taxon>Eukaryota</taxon>
        <taxon>Fungi</taxon>
        <taxon>Dikarya</taxon>
        <taxon>Ascomycota</taxon>
        <taxon>Saccharomycotina</taxon>
        <taxon>Saccharomycetes</taxon>
        <taxon>Saccharomycetales</taxon>
        <taxon>Saccharomycetaceae</taxon>
        <taxon>Saccharomyces</taxon>
    </lineage>
</organism>
<accession>A6ZZY2</accession>
<protein>
    <recommendedName>
        <fullName>IML2-like protein SCY_3392</fullName>
    </recommendedName>
    <alternativeName>
        <fullName>YKR018C homolog</fullName>
    </alternativeName>
</protein>
<proteinExistence type="inferred from homology"/>
<name>YKR18_YEAS7</name>
<feature type="chain" id="PRO_0000333361" description="IML2-like protein SCY_3392">
    <location>
        <begin position="1"/>
        <end position="725"/>
    </location>
</feature>
<feature type="modified residue" description="Phosphothreonine" evidence="2">
    <location>
        <position position="196"/>
    </location>
</feature>
<feature type="modified residue" description="Phosphoserine" evidence="2">
    <location>
        <position position="246"/>
    </location>
</feature>
<feature type="modified residue" description="Phosphoserine" evidence="2">
    <location>
        <position position="377"/>
    </location>
</feature>
<feature type="modified residue" description="Phosphoserine" evidence="2">
    <location>
        <position position="380"/>
    </location>
</feature>
<sequence>MFKVFGFGAKEEIPELSQEEKTKAILKQAHDFEQALRAMDYVLDDNADEGLALLDESDAKEASDQTINALARGVIEFLEATLGFEAEEMKKASATLAKAEALSLKSRERAQKIGLKSSSLYPPGTVYAVTYTESCLLHALLMIFSESMMEAAKAILKLRKSYYMLQEILETIKAANKAKKLKITSGSEDKESTPATFITGGDAFNSVDIPYELTPEEQKDKDLLQFAEQIHSMRTKRLSGAHIGNSPAINRLRGELGLQAMEDLPEEEITDHKVLSDDIDLSQATIDEFVHSGVNLCFGILQVVISLLPPAIGAVLSVVGFRGSREEGLRLVWKATKQRNVHGCIGLLALMFYYDGPFQFTDDDFDIPAAVKDSSNSEDSEDEEMDGPTLLHPGKILEDALLQSRALFPNSALWLLNEARMLSGKGRLEEAVALMDSIDVSKIRMRQVKSLMIFDRAITLIHLHQYDRAAEDILSLLDISDWSHAFYTYFAGCCYLENWRMCEMGLMKSDKKDEYQKKAEELIFTSVNLLGKKTFKSKNLPLDRFILRKVEQFKAKKEELGVENPLDGIATSPVHEISYFYNGYNRMSEEHLELTKKMLTEYRNPAIEALDSDQELIKDLLVSLTLRRLGHIQEGCDILDEKVLPKFFSIQNGKVKYIKKTEDPWAYPTALYERALFTWKLEGMDGLPESKEWLLRAQGYADDYELSTRVGMKIKAAIDRVDHSL</sequence>
<comment type="function">
    <text evidence="1">May be involved in mitochondrial DNA stability.</text>
</comment>
<comment type="subcellular location">
    <subcellularLocation>
        <location evidence="2">Cytoplasm</location>
    </subcellularLocation>
    <subcellularLocation>
        <location evidence="2">Nucleus</location>
    </subcellularLocation>
</comment>
<comment type="similarity">
    <text evidence="3">Belongs to the IML2 family.</text>
</comment>
<keyword id="KW-0963">Cytoplasm</keyword>
<keyword id="KW-0539">Nucleus</keyword>
<keyword id="KW-0597">Phosphoprotein</keyword>
<dbReference type="EMBL" id="AAFW02000152">
    <property type="protein sequence ID" value="EDN59925.1"/>
    <property type="molecule type" value="Genomic_DNA"/>
</dbReference>
<dbReference type="HOGENOM" id="CLU_014926_0_0_1"/>
<dbReference type="Proteomes" id="UP000007060">
    <property type="component" value="Unassembled WGS sequence"/>
</dbReference>
<dbReference type="GO" id="GO:0005829">
    <property type="term" value="C:cytosol"/>
    <property type="evidence" value="ECO:0007669"/>
    <property type="project" value="TreeGrafter"/>
</dbReference>
<dbReference type="GO" id="GO:0005741">
    <property type="term" value="C:mitochondrial outer membrane"/>
    <property type="evidence" value="ECO:0007669"/>
    <property type="project" value="TreeGrafter"/>
</dbReference>
<dbReference type="GO" id="GO:0005634">
    <property type="term" value="C:nucleus"/>
    <property type="evidence" value="ECO:0007669"/>
    <property type="project" value="UniProtKB-SubCell"/>
</dbReference>
<dbReference type="InterPro" id="IPR019412">
    <property type="entry name" value="Iml2/TPR_39"/>
</dbReference>
<dbReference type="InterPro" id="IPR011990">
    <property type="entry name" value="TPR-like_helical_dom_sf"/>
</dbReference>
<dbReference type="PANTHER" id="PTHR31859">
    <property type="entry name" value="TETRATRICOPEPTIDE REPEAT PROTEIN 39 FAMILY MEMBER"/>
    <property type="match status" value="1"/>
</dbReference>
<dbReference type="PANTHER" id="PTHR31859:SF1">
    <property type="entry name" value="TETRATRICOPEPTIDE REPEAT PROTEIN 39C"/>
    <property type="match status" value="1"/>
</dbReference>
<dbReference type="Pfam" id="PF10300">
    <property type="entry name" value="Iml2-TPR_39"/>
    <property type="match status" value="1"/>
</dbReference>
<dbReference type="SUPFAM" id="SSF48452">
    <property type="entry name" value="TPR-like"/>
    <property type="match status" value="1"/>
</dbReference>
<reference key="1">
    <citation type="journal article" date="2007" name="Proc. Natl. Acad. Sci. U.S.A.">
        <title>Genome sequencing and comparative analysis of Saccharomyces cerevisiae strain YJM789.</title>
        <authorList>
            <person name="Wei W."/>
            <person name="McCusker J.H."/>
            <person name="Hyman R.W."/>
            <person name="Jones T."/>
            <person name="Ning Y."/>
            <person name="Cao Z."/>
            <person name="Gu Z."/>
            <person name="Bruno D."/>
            <person name="Miranda M."/>
            <person name="Nguyen M."/>
            <person name="Wilhelmy J."/>
            <person name="Komp C."/>
            <person name="Tamse R."/>
            <person name="Wang X."/>
            <person name="Jia P."/>
            <person name="Luedi P."/>
            <person name="Oefner P.J."/>
            <person name="David L."/>
            <person name="Dietrich F.S."/>
            <person name="Li Y."/>
            <person name="Davis R.W."/>
            <person name="Steinmetz L.M."/>
        </authorList>
    </citation>
    <scope>NUCLEOTIDE SEQUENCE [LARGE SCALE GENOMIC DNA]</scope>
    <source>
        <strain>YJM789</strain>
    </source>
</reference>
<evidence type="ECO:0000250" key="1"/>
<evidence type="ECO:0000250" key="2">
    <source>
        <dbReference type="UniProtKB" id="P36114"/>
    </source>
</evidence>
<evidence type="ECO:0000305" key="3"/>
<gene>
    <name type="ORF">SCY_3392</name>
</gene>